<evidence type="ECO:0000255" key="1">
    <source>
        <dbReference type="HAMAP-Rule" id="MF_00469"/>
    </source>
</evidence>
<evidence type="ECO:0000256" key="2">
    <source>
        <dbReference type="SAM" id="MobiDB-lite"/>
    </source>
</evidence>
<keyword id="KW-0560">Oxidoreductase</keyword>
<keyword id="KW-0819">tRNA processing</keyword>
<feature type="chain" id="PRO_1000081190" description="tRNA uridine(34) hydroxylase">
    <location>
        <begin position="1"/>
        <end position="332"/>
    </location>
</feature>
<feature type="domain" description="Rhodanese" evidence="1">
    <location>
        <begin position="127"/>
        <end position="221"/>
    </location>
</feature>
<feature type="region of interest" description="Disordered" evidence="2">
    <location>
        <begin position="308"/>
        <end position="332"/>
    </location>
</feature>
<feature type="compositionally biased region" description="Basic and acidic residues" evidence="2">
    <location>
        <begin position="321"/>
        <end position="332"/>
    </location>
</feature>
<feature type="active site" description="Cysteine persulfide intermediate" evidence="1">
    <location>
        <position position="181"/>
    </location>
</feature>
<proteinExistence type="inferred from homology"/>
<protein>
    <recommendedName>
        <fullName evidence="1">tRNA uridine(34) hydroxylase</fullName>
        <ecNumber evidence="1">1.14.-.-</ecNumber>
    </recommendedName>
    <alternativeName>
        <fullName evidence="1">tRNA hydroxylation protein O</fullName>
    </alternativeName>
</protein>
<gene>
    <name evidence="1" type="primary">trhO</name>
    <name type="ordered locus">FTA_1178</name>
</gene>
<comment type="function">
    <text evidence="1">Catalyzes oxygen-dependent 5-hydroxyuridine (ho5U) modification at position 34 in tRNAs.</text>
</comment>
<comment type="catalytic activity">
    <reaction evidence="1">
        <text>uridine(34) in tRNA + AH2 + O2 = 5-hydroxyuridine(34) in tRNA + A + H2O</text>
        <dbReference type="Rhea" id="RHEA:64224"/>
        <dbReference type="Rhea" id="RHEA-COMP:11727"/>
        <dbReference type="Rhea" id="RHEA-COMP:13381"/>
        <dbReference type="ChEBI" id="CHEBI:13193"/>
        <dbReference type="ChEBI" id="CHEBI:15377"/>
        <dbReference type="ChEBI" id="CHEBI:15379"/>
        <dbReference type="ChEBI" id="CHEBI:17499"/>
        <dbReference type="ChEBI" id="CHEBI:65315"/>
        <dbReference type="ChEBI" id="CHEBI:136877"/>
    </reaction>
</comment>
<comment type="similarity">
    <text evidence="1">Belongs to the TrhO family.</text>
</comment>
<dbReference type="EC" id="1.14.-.-" evidence="1"/>
<dbReference type="EMBL" id="CP000803">
    <property type="protein sequence ID" value="ABU61654.2"/>
    <property type="molecule type" value="Genomic_DNA"/>
</dbReference>
<dbReference type="SMR" id="A7NCF1"/>
<dbReference type="KEGG" id="fta:FTA_1178"/>
<dbReference type="HOGENOM" id="CLU_038878_0_0_6"/>
<dbReference type="GO" id="GO:0016705">
    <property type="term" value="F:oxidoreductase activity, acting on paired donors, with incorporation or reduction of molecular oxygen"/>
    <property type="evidence" value="ECO:0007669"/>
    <property type="project" value="UniProtKB-UniRule"/>
</dbReference>
<dbReference type="GO" id="GO:0006400">
    <property type="term" value="P:tRNA modification"/>
    <property type="evidence" value="ECO:0007669"/>
    <property type="project" value="UniProtKB-UniRule"/>
</dbReference>
<dbReference type="CDD" id="cd01518">
    <property type="entry name" value="RHOD_YceA"/>
    <property type="match status" value="1"/>
</dbReference>
<dbReference type="Gene3D" id="3.30.70.100">
    <property type="match status" value="1"/>
</dbReference>
<dbReference type="Gene3D" id="3.40.250.10">
    <property type="entry name" value="Rhodanese-like domain"/>
    <property type="match status" value="1"/>
</dbReference>
<dbReference type="HAMAP" id="MF_00469">
    <property type="entry name" value="TrhO"/>
    <property type="match status" value="1"/>
</dbReference>
<dbReference type="InterPro" id="IPR001763">
    <property type="entry name" value="Rhodanese-like_dom"/>
</dbReference>
<dbReference type="InterPro" id="IPR036873">
    <property type="entry name" value="Rhodanese-like_dom_sf"/>
</dbReference>
<dbReference type="InterPro" id="IPR020936">
    <property type="entry name" value="TrhO"/>
</dbReference>
<dbReference type="InterPro" id="IPR040503">
    <property type="entry name" value="TRHO_N"/>
</dbReference>
<dbReference type="NCBIfam" id="NF001136">
    <property type="entry name" value="PRK00142.1-4"/>
    <property type="match status" value="1"/>
</dbReference>
<dbReference type="PANTHER" id="PTHR43268:SF3">
    <property type="entry name" value="RHODANESE-LIKE DOMAIN-CONTAINING PROTEIN 7-RELATED"/>
    <property type="match status" value="1"/>
</dbReference>
<dbReference type="PANTHER" id="PTHR43268">
    <property type="entry name" value="THIOSULFATE SULFURTRANSFERASE/RHODANESE-LIKE DOMAIN-CONTAINING PROTEIN 2"/>
    <property type="match status" value="1"/>
</dbReference>
<dbReference type="Pfam" id="PF00581">
    <property type="entry name" value="Rhodanese"/>
    <property type="match status" value="1"/>
</dbReference>
<dbReference type="Pfam" id="PF17773">
    <property type="entry name" value="UPF0176_N"/>
    <property type="match status" value="1"/>
</dbReference>
<dbReference type="SMART" id="SM00450">
    <property type="entry name" value="RHOD"/>
    <property type="match status" value="1"/>
</dbReference>
<dbReference type="SUPFAM" id="SSF52821">
    <property type="entry name" value="Rhodanese/Cell cycle control phosphatase"/>
    <property type="match status" value="1"/>
</dbReference>
<dbReference type="PROSITE" id="PS50206">
    <property type="entry name" value="RHODANESE_3"/>
    <property type="match status" value="1"/>
</dbReference>
<name>TRHO_FRATF</name>
<reference key="1">
    <citation type="journal article" date="2009" name="PLoS ONE">
        <title>Complete genome sequence of Francisella tularensis subspecies holarctica FTNF002-00.</title>
        <authorList>
            <person name="Barabote R.D."/>
            <person name="Xie G."/>
            <person name="Brettin T.S."/>
            <person name="Hinrichs S.H."/>
            <person name="Fey P.D."/>
            <person name="Jay J.J."/>
            <person name="Engle J.L."/>
            <person name="Godbole S.D."/>
            <person name="Noronha J.M."/>
            <person name="Scheuermann R.H."/>
            <person name="Zhou L.W."/>
            <person name="Lion C."/>
            <person name="Dempsey M.P."/>
        </authorList>
    </citation>
    <scope>NUCLEOTIDE SEQUENCE [LARGE SCALE GENOMIC DNA]</scope>
    <source>
        <strain>FTNF002-00 / FTA</strain>
    </source>
</reference>
<organism>
    <name type="scientific">Francisella tularensis subsp. holarctica (strain FTNF002-00 / FTA)</name>
    <dbReference type="NCBI Taxonomy" id="458234"/>
    <lineage>
        <taxon>Bacteria</taxon>
        <taxon>Pseudomonadati</taxon>
        <taxon>Pseudomonadota</taxon>
        <taxon>Gammaproteobacteria</taxon>
        <taxon>Thiotrichales</taxon>
        <taxon>Francisellaceae</taxon>
        <taxon>Francisella</taxon>
    </lineage>
</organism>
<sequence length="332" mass="38226">MGIYMSQIVVCAMYKFVTLEDFEAMRQPLLDTMIKNNVKGTLLLANEGINGTVAGTRESIDNLLAYLKADPRLVDIDYKESYHQEMPFYRSKVKLKKEIVTLGIDEIDPNKICGKYVEPKDWNDLISDPETVLIDTRNEYEIEIGTFKNAINPHTENFREFPQYVDENLDPKKHKKVAMFCTGGIRCEKSTALLKAKGFDEVYHLKGGILKYLEEVPKEKSMWQGECFVFDSRVAVNHDLEKGNYDQCFACRMPITEDDKKRPEYVKGISCHHCYDKVTEKQKARFAEREKQSQLAAEKGFSHVGDEAKKLAQLNKQKKQQAKEAARKKAQQ</sequence>
<accession>A7NCF1</accession>